<keyword id="KW-0025">Alternative splicing</keyword>
<keyword id="KW-0238">DNA-binding</keyword>
<keyword id="KW-1017">Isopeptide bond</keyword>
<keyword id="KW-0539">Nucleus</keyword>
<keyword id="KW-1185">Reference proteome</keyword>
<keyword id="KW-0804">Transcription</keyword>
<keyword id="KW-0805">Transcription regulation</keyword>
<keyword id="KW-0832">Ubl conjugation</keyword>
<reference key="1">
    <citation type="journal article" date="1997" name="J. Biol. Chem.">
        <title>The basic helix-loop-helix-zipper transcription factor USF1 regulates expression of the surfactant protein-A gene.</title>
        <authorList>
            <person name="Gao E."/>
            <person name="Wang Y."/>
            <person name="Alcorn J.L."/>
            <person name="Mendelson C.R."/>
        </authorList>
    </citation>
    <scope>NUCLEOTIDE SEQUENCE [MRNA] (ISOFORMS USF1A AND USF1B)</scope>
    <source>
        <strain>New Zealand white</strain>
        <tissue>Lung</tissue>
    </source>
</reference>
<sequence>MKGQQKTAETEEGTVQIQEGAVATGEDPTSVAIASIQSAATFPDPNVKYVFRTENGGQVMYRVIQVSEGQLDGQTEGTGAISGYPATQSMTQAVIQGAFTSDDTVDTEGTAAETHYTYFPSTAVGDGAGGTTSGSTAAVVTTQGSEALLGQATPPGTGQFFVMMSPQEVLQGGSQRSIAPRTHPYSPKSAAPRTTRDEKRRAQHNEVERRRRDKINNWIVQLSKIIPDCSMESTKSGQSKGGILSKACDYIQELRQSNHRLSEELQGLDQLQLDNDVLRQQVEDLKNKNLLLRAQLRHHGLEVVIKNDSN</sequence>
<accession>O02818</accession>
<accession>O02819</accession>
<proteinExistence type="evidence at transcript level"/>
<gene>
    <name type="primary">USF1</name>
</gene>
<comment type="function">
    <text>Transcription factor that binds to a symmetrical DNA sequence (E-boxes) (5'-CACGTG-3') that is found in a variety of viral and cellular promoters. Regulates the expression of the surfactant protein-A (SP-A) gene.</text>
</comment>
<comment type="subunit">
    <text>Efficient DNA binding requires dimerization with another bHLH protein. Binds DNA as a homodimer or a heterodimer (USF1/USF2).</text>
</comment>
<comment type="subcellular location">
    <subcellularLocation>
        <location>Nucleus</location>
    </subcellularLocation>
</comment>
<comment type="alternative products">
    <event type="alternative splicing"/>
    <isoform>
        <id>O02818-1</id>
        <name>USF1A</name>
        <sequence type="displayed"/>
    </isoform>
    <isoform>
        <id>O02818-2</id>
        <name>USF1B</name>
        <sequence type="described" ref="VSP_002163"/>
    </isoform>
</comment>
<name>USF1_RABIT</name>
<evidence type="ECO:0000250" key="1">
    <source>
        <dbReference type="UniProtKB" id="P22415"/>
    </source>
</evidence>
<evidence type="ECO:0000255" key="2">
    <source>
        <dbReference type="PROSITE-ProRule" id="PRU00981"/>
    </source>
</evidence>
<evidence type="ECO:0000256" key="3">
    <source>
        <dbReference type="SAM" id="MobiDB-lite"/>
    </source>
</evidence>
<evidence type="ECO:0000303" key="4">
    <source>
    </source>
</evidence>
<organism>
    <name type="scientific">Oryctolagus cuniculus</name>
    <name type="common">Rabbit</name>
    <dbReference type="NCBI Taxonomy" id="9986"/>
    <lineage>
        <taxon>Eukaryota</taxon>
        <taxon>Metazoa</taxon>
        <taxon>Chordata</taxon>
        <taxon>Craniata</taxon>
        <taxon>Vertebrata</taxon>
        <taxon>Euteleostomi</taxon>
        <taxon>Mammalia</taxon>
        <taxon>Eutheria</taxon>
        <taxon>Euarchontoglires</taxon>
        <taxon>Glires</taxon>
        <taxon>Lagomorpha</taxon>
        <taxon>Leporidae</taxon>
        <taxon>Oryctolagus</taxon>
    </lineage>
</organism>
<protein>
    <recommendedName>
        <fullName>Upstream stimulatory factor 1</fullName>
    </recommendedName>
    <alternativeName>
        <fullName>Major late transcription factor 1</fullName>
    </alternativeName>
</protein>
<feature type="chain" id="PRO_0000127498" description="Upstream stimulatory factor 1">
    <location>
        <begin position="1"/>
        <end position="310"/>
    </location>
</feature>
<feature type="domain" description="bHLH" evidence="2">
    <location>
        <begin position="199"/>
        <end position="254"/>
    </location>
</feature>
<feature type="region of interest" description="Disordered" evidence="3">
    <location>
        <begin position="1"/>
        <end position="26"/>
    </location>
</feature>
<feature type="region of interest" description="Disordered" evidence="3">
    <location>
        <begin position="171"/>
        <end position="209"/>
    </location>
</feature>
<feature type="region of interest" description="Leucine-zipper">
    <location>
        <begin position="271"/>
        <end position="292"/>
    </location>
</feature>
<feature type="compositionally biased region" description="Polar residues" evidence="3">
    <location>
        <begin position="1"/>
        <end position="17"/>
    </location>
</feature>
<feature type="compositionally biased region" description="Basic and acidic residues" evidence="3">
    <location>
        <begin position="194"/>
        <end position="209"/>
    </location>
</feature>
<feature type="cross-link" description="Glycyl lysine isopeptide (Lys-Gly) (interchain with G-Cter in SUMO2)" evidence="1">
    <location>
        <position position="306"/>
    </location>
</feature>
<feature type="splice variant" id="VSP_002163" description="In isoform USF1B." evidence="4">
    <location>
        <begin position="131"/>
        <end position="158"/>
    </location>
</feature>
<dbReference type="EMBL" id="AF003894">
    <property type="protein sequence ID" value="AAC48764.1"/>
    <property type="molecule type" value="mRNA"/>
</dbReference>
<dbReference type="EMBL" id="AF003895">
    <property type="protein sequence ID" value="AAC48765.1"/>
    <property type="molecule type" value="mRNA"/>
</dbReference>
<dbReference type="RefSeq" id="NP_001076104.1">
    <molecule id="O02818-1"/>
    <property type="nucleotide sequence ID" value="NM_001082635.1"/>
</dbReference>
<dbReference type="SMR" id="O02818"/>
<dbReference type="FunCoup" id="O02818">
    <property type="interactions" value="1040"/>
</dbReference>
<dbReference type="STRING" id="9986.ENSOCUP00000043874"/>
<dbReference type="PaxDb" id="9986-ENSOCUP00000002031"/>
<dbReference type="GeneID" id="100009324"/>
<dbReference type="KEGG" id="ocu:100009324"/>
<dbReference type="CTD" id="7391"/>
<dbReference type="eggNOG" id="KOG1318">
    <property type="taxonomic scope" value="Eukaryota"/>
</dbReference>
<dbReference type="InParanoid" id="O02818"/>
<dbReference type="OrthoDB" id="690068at2759"/>
<dbReference type="Proteomes" id="UP000001811">
    <property type="component" value="Unplaced"/>
</dbReference>
<dbReference type="GO" id="GO:0005634">
    <property type="term" value="C:nucleus"/>
    <property type="evidence" value="ECO:0007669"/>
    <property type="project" value="UniProtKB-SubCell"/>
</dbReference>
<dbReference type="GO" id="GO:0000981">
    <property type="term" value="F:DNA-binding transcription factor activity, RNA polymerase II-specific"/>
    <property type="evidence" value="ECO:0007669"/>
    <property type="project" value="TreeGrafter"/>
</dbReference>
<dbReference type="GO" id="GO:0046983">
    <property type="term" value="F:protein dimerization activity"/>
    <property type="evidence" value="ECO:0007669"/>
    <property type="project" value="InterPro"/>
</dbReference>
<dbReference type="GO" id="GO:0000978">
    <property type="term" value="F:RNA polymerase II cis-regulatory region sequence-specific DNA binding"/>
    <property type="evidence" value="ECO:0007669"/>
    <property type="project" value="TreeGrafter"/>
</dbReference>
<dbReference type="GO" id="GO:0045944">
    <property type="term" value="P:positive regulation of transcription by RNA polymerase II"/>
    <property type="evidence" value="ECO:0007669"/>
    <property type="project" value="UniProtKB-ARBA"/>
</dbReference>
<dbReference type="CDD" id="cd18924">
    <property type="entry name" value="bHLHzip_USF1"/>
    <property type="match status" value="1"/>
</dbReference>
<dbReference type="FunFam" id="4.10.280.10:FF:000067">
    <property type="entry name" value="upstream stimulatory factor 1 isoform X1"/>
    <property type="match status" value="1"/>
</dbReference>
<dbReference type="Gene3D" id="4.10.280.10">
    <property type="entry name" value="Helix-loop-helix DNA-binding domain"/>
    <property type="match status" value="1"/>
</dbReference>
<dbReference type="InterPro" id="IPR011598">
    <property type="entry name" value="bHLH_dom"/>
</dbReference>
<dbReference type="InterPro" id="IPR036638">
    <property type="entry name" value="HLH_DNA-bd_sf"/>
</dbReference>
<dbReference type="InterPro" id="IPR051732">
    <property type="entry name" value="USF"/>
</dbReference>
<dbReference type="PANTHER" id="PTHR46117">
    <property type="entry name" value="FI24210P1"/>
    <property type="match status" value="1"/>
</dbReference>
<dbReference type="PANTHER" id="PTHR46117:SF1">
    <property type="entry name" value="UPSTREAM STIMULATORY FACTOR 1"/>
    <property type="match status" value="1"/>
</dbReference>
<dbReference type="Pfam" id="PF00010">
    <property type="entry name" value="HLH"/>
    <property type="match status" value="1"/>
</dbReference>
<dbReference type="SMART" id="SM00353">
    <property type="entry name" value="HLH"/>
    <property type="match status" value="1"/>
</dbReference>
<dbReference type="SUPFAM" id="SSF47459">
    <property type="entry name" value="HLH, helix-loop-helix DNA-binding domain"/>
    <property type="match status" value="1"/>
</dbReference>
<dbReference type="PROSITE" id="PS50888">
    <property type="entry name" value="BHLH"/>
    <property type="match status" value="1"/>
</dbReference>